<protein>
    <recommendedName>
        <fullName evidence="1">Serine--tRNA ligase</fullName>
        <ecNumber evidence="1">6.1.1.11</ecNumber>
    </recommendedName>
    <alternativeName>
        <fullName evidence="1">Seryl-tRNA synthetase</fullName>
        <shortName evidence="1">SerRS</shortName>
    </alternativeName>
    <alternativeName>
        <fullName evidence="1">Seryl-tRNA(Ser/Sec) synthetase</fullName>
    </alternativeName>
</protein>
<evidence type="ECO:0000255" key="1">
    <source>
        <dbReference type="HAMAP-Rule" id="MF_00176"/>
    </source>
</evidence>
<dbReference type="EC" id="6.1.1.11" evidence="1"/>
<dbReference type="EMBL" id="CP001098">
    <property type="protein sequence ID" value="ACL70851.1"/>
    <property type="molecule type" value="Genomic_DNA"/>
</dbReference>
<dbReference type="RefSeq" id="WP_015923820.1">
    <property type="nucleotide sequence ID" value="NC_011899.1"/>
</dbReference>
<dbReference type="SMR" id="B8CZZ9"/>
<dbReference type="STRING" id="373903.Hore_21060"/>
<dbReference type="KEGG" id="hor:Hore_21060"/>
<dbReference type="eggNOG" id="COG0172">
    <property type="taxonomic scope" value="Bacteria"/>
</dbReference>
<dbReference type="HOGENOM" id="CLU_023797_1_1_9"/>
<dbReference type="OrthoDB" id="9804647at2"/>
<dbReference type="UniPathway" id="UPA00906">
    <property type="reaction ID" value="UER00895"/>
</dbReference>
<dbReference type="Proteomes" id="UP000000719">
    <property type="component" value="Chromosome"/>
</dbReference>
<dbReference type="GO" id="GO:0005737">
    <property type="term" value="C:cytoplasm"/>
    <property type="evidence" value="ECO:0007669"/>
    <property type="project" value="UniProtKB-SubCell"/>
</dbReference>
<dbReference type="GO" id="GO:0005524">
    <property type="term" value="F:ATP binding"/>
    <property type="evidence" value="ECO:0007669"/>
    <property type="project" value="UniProtKB-UniRule"/>
</dbReference>
<dbReference type="GO" id="GO:0140096">
    <property type="term" value="F:catalytic activity, acting on a protein"/>
    <property type="evidence" value="ECO:0007669"/>
    <property type="project" value="UniProtKB-ARBA"/>
</dbReference>
<dbReference type="GO" id="GO:0004828">
    <property type="term" value="F:serine-tRNA ligase activity"/>
    <property type="evidence" value="ECO:0007669"/>
    <property type="project" value="UniProtKB-UniRule"/>
</dbReference>
<dbReference type="GO" id="GO:0016740">
    <property type="term" value="F:transferase activity"/>
    <property type="evidence" value="ECO:0007669"/>
    <property type="project" value="UniProtKB-ARBA"/>
</dbReference>
<dbReference type="GO" id="GO:0016260">
    <property type="term" value="P:selenocysteine biosynthetic process"/>
    <property type="evidence" value="ECO:0007669"/>
    <property type="project" value="UniProtKB-UniRule"/>
</dbReference>
<dbReference type="GO" id="GO:0006434">
    <property type="term" value="P:seryl-tRNA aminoacylation"/>
    <property type="evidence" value="ECO:0007669"/>
    <property type="project" value="UniProtKB-UniRule"/>
</dbReference>
<dbReference type="CDD" id="cd00770">
    <property type="entry name" value="SerRS_core"/>
    <property type="match status" value="1"/>
</dbReference>
<dbReference type="Gene3D" id="3.30.930.10">
    <property type="entry name" value="Bira Bifunctional Protein, Domain 2"/>
    <property type="match status" value="1"/>
</dbReference>
<dbReference type="Gene3D" id="1.10.287.40">
    <property type="entry name" value="Serine-tRNA synthetase, tRNA binding domain"/>
    <property type="match status" value="1"/>
</dbReference>
<dbReference type="HAMAP" id="MF_00176">
    <property type="entry name" value="Ser_tRNA_synth_type1"/>
    <property type="match status" value="1"/>
</dbReference>
<dbReference type="InterPro" id="IPR002314">
    <property type="entry name" value="aa-tRNA-synt_IIb"/>
</dbReference>
<dbReference type="InterPro" id="IPR006195">
    <property type="entry name" value="aa-tRNA-synth_II"/>
</dbReference>
<dbReference type="InterPro" id="IPR045864">
    <property type="entry name" value="aa-tRNA-synth_II/BPL/LPL"/>
</dbReference>
<dbReference type="InterPro" id="IPR002317">
    <property type="entry name" value="Ser-tRNA-ligase_type_1"/>
</dbReference>
<dbReference type="InterPro" id="IPR015866">
    <property type="entry name" value="Ser-tRNA-synth_1_N"/>
</dbReference>
<dbReference type="InterPro" id="IPR042103">
    <property type="entry name" value="SerRS_1_N_sf"/>
</dbReference>
<dbReference type="InterPro" id="IPR033729">
    <property type="entry name" value="SerRS_core"/>
</dbReference>
<dbReference type="InterPro" id="IPR010978">
    <property type="entry name" value="tRNA-bd_arm"/>
</dbReference>
<dbReference type="NCBIfam" id="TIGR00414">
    <property type="entry name" value="serS"/>
    <property type="match status" value="1"/>
</dbReference>
<dbReference type="PANTHER" id="PTHR43697:SF1">
    <property type="entry name" value="SERINE--TRNA LIGASE"/>
    <property type="match status" value="1"/>
</dbReference>
<dbReference type="PANTHER" id="PTHR43697">
    <property type="entry name" value="SERYL-TRNA SYNTHETASE"/>
    <property type="match status" value="1"/>
</dbReference>
<dbReference type="Pfam" id="PF02403">
    <property type="entry name" value="Seryl_tRNA_N"/>
    <property type="match status" value="1"/>
</dbReference>
<dbReference type="Pfam" id="PF00587">
    <property type="entry name" value="tRNA-synt_2b"/>
    <property type="match status" value="1"/>
</dbReference>
<dbReference type="PIRSF" id="PIRSF001529">
    <property type="entry name" value="Ser-tRNA-synth_IIa"/>
    <property type="match status" value="1"/>
</dbReference>
<dbReference type="PRINTS" id="PR00981">
    <property type="entry name" value="TRNASYNTHSER"/>
</dbReference>
<dbReference type="SUPFAM" id="SSF55681">
    <property type="entry name" value="Class II aaRS and biotin synthetases"/>
    <property type="match status" value="1"/>
</dbReference>
<dbReference type="SUPFAM" id="SSF46589">
    <property type="entry name" value="tRNA-binding arm"/>
    <property type="match status" value="1"/>
</dbReference>
<dbReference type="PROSITE" id="PS50862">
    <property type="entry name" value="AA_TRNA_LIGASE_II"/>
    <property type="match status" value="1"/>
</dbReference>
<reference key="1">
    <citation type="journal article" date="2009" name="PLoS ONE">
        <title>Genome analysis of the anaerobic thermohalophilic bacterium Halothermothrix orenii.</title>
        <authorList>
            <person name="Mavromatis K."/>
            <person name="Ivanova N."/>
            <person name="Anderson I."/>
            <person name="Lykidis A."/>
            <person name="Hooper S.D."/>
            <person name="Sun H."/>
            <person name="Kunin V."/>
            <person name="Lapidus A."/>
            <person name="Hugenholtz P."/>
            <person name="Patel B."/>
            <person name="Kyrpides N.C."/>
        </authorList>
    </citation>
    <scope>NUCLEOTIDE SEQUENCE [LARGE SCALE GENOMIC DNA]</scope>
    <source>
        <strain>H 168 / OCM 544 / DSM 9562</strain>
    </source>
</reference>
<feature type="chain" id="PRO_1000199487" description="Serine--tRNA ligase">
    <location>
        <begin position="1"/>
        <end position="422"/>
    </location>
</feature>
<feature type="binding site" evidence="1">
    <location>
        <begin position="229"/>
        <end position="231"/>
    </location>
    <ligand>
        <name>L-serine</name>
        <dbReference type="ChEBI" id="CHEBI:33384"/>
    </ligand>
</feature>
<feature type="binding site" evidence="1">
    <location>
        <begin position="260"/>
        <end position="262"/>
    </location>
    <ligand>
        <name>ATP</name>
        <dbReference type="ChEBI" id="CHEBI:30616"/>
    </ligand>
</feature>
<feature type="binding site" evidence="1">
    <location>
        <position position="283"/>
    </location>
    <ligand>
        <name>L-serine</name>
        <dbReference type="ChEBI" id="CHEBI:33384"/>
    </ligand>
</feature>
<feature type="binding site" evidence="1">
    <location>
        <begin position="347"/>
        <end position="350"/>
    </location>
    <ligand>
        <name>ATP</name>
        <dbReference type="ChEBI" id="CHEBI:30616"/>
    </ligand>
</feature>
<feature type="binding site" evidence="1">
    <location>
        <position position="383"/>
    </location>
    <ligand>
        <name>L-serine</name>
        <dbReference type="ChEBI" id="CHEBI:33384"/>
    </ligand>
</feature>
<name>SYS_HALOH</name>
<comment type="function">
    <text evidence="1">Catalyzes the attachment of serine to tRNA(Ser). Is also able to aminoacylate tRNA(Sec) with serine, to form the misacylated tRNA L-seryl-tRNA(Sec), which will be further converted into selenocysteinyl-tRNA(Sec).</text>
</comment>
<comment type="catalytic activity">
    <reaction evidence="1">
        <text>tRNA(Ser) + L-serine + ATP = L-seryl-tRNA(Ser) + AMP + diphosphate + H(+)</text>
        <dbReference type="Rhea" id="RHEA:12292"/>
        <dbReference type="Rhea" id="RHEA-COMP:9669"/>
        <dbReference type="Rhea" id="RHEA-COMP:9703"/>
        <dbReference type="ChEBI" id="CHEBI:15378"/>
        <dbReference type="ChEBI" id="CHEBI:30616"/>
        <dbReference type="ChEBI" id="CHEBI:33019"/>
        <dbReference type="ChEBI" id="CHEBI:33384"/>
        <dbReference type="ChEBI" id="CHEBI:78442"/>
        <dbReference type="ChEBI" id="CHEBI:78533"/>
        <dbReference type="ChEBI" id="CHEBI:456215"/>
        <dbReference type="EC" id="6.1.1.11"/>
    </reaction>
</comment>
<comment type="catalytic activity">
    <reaction evidence="1">
        <text>tRNA(Sec) + L-serine + ATP = L-seryl-tRNA(Sec) + AMP + diphosphate + H(+)</text>
        <dbReference type="Rhea" id="RHEA:42580"/>
        <dbReference type="Rhea" id="RHEA-COMP:9742"/>
        <dbReference type="Rhea" id="RHEA-COMP:10128"/>
        <dbReference type="ChEBI" id="CHEBI:15378"/>
        <dbReference type="ChEBI" id="CHEBI:30616"/>
        <dbReference type="ChEBI" id="CHEBI:33019"/>
        <dbReference type="ChEBI" id="CHEBI:33384"/>
        <dbReference type="ChEBI" id="CHEBI:78442"/>
        <dbReference type="ChEBI" id="CHEBI:78533"/>
        <dbReference type="ChEBI" id="CHEBI:456215"/>
        <dbReference type="EC" id="6.1.1.11"/>
    </reaction>
</comment>
<comment type="pathway">
    <text evidence="1">Aminoacyl-tRNA biosynthesis; selenocysteinyl-tRNA(Sec) biosynthesis; L-seryl-tRNA(Sec) from L-serine and tRNA(Sec): step 1/1.</text>
</comment>
<comment type="subunit">
    <text evidence="1">Homodimer. The tRNA molecule binds across the dimer.</text>
</comment>
<comment type="subcellular location">
    <subcellularLocation>
        <location evidence="1">Cytoplasm</location>
    </subcellularLocation>
</comment>
<comment type="domain">
    <text evidence="1">Consists of two distinct domains, a catalytic core and a N-terminal extension that is involved in tRNA binding.</text>
</comment>
<comment type="similarity">
    <text evidence="1">Belongs to the class-II aminoacyl-tRNA synthetase family. Type-1 seryl-tRNA synthetase subfamily.</text>
</comment>
<keyword id="KW-0030">Aminoacyl-tRNA synthetase</keyword>
<keyword id="KW-0067">ATP-binding</keyword>
<keyword id="KW-0963">Cytoplasm</keyword>
<keyword id="KW-0436">Ligase</keyword>
<keyword id="KW-0547">Nucleotide-binding</keyword>
<keyword id="KW-0648">Protein biosynthesis</keyword>
<keyword id="KW-1185">Reference proteome</keyword>
<organism>
    <name type="scientific">Halothermothrix orenii (strain H 168 / OCM 544 / DSM 9562)</name>
    <dbReference type="NCBI Taxonomy" id="373903"/>
    <lineage>
        <taxon>Bacteria</taxon>
        <taxon>Bacillati</taxon>
        <taxon>Bacillota</taxon>
        <taxon>Clostridia</taxon>
        <taxon>Halanaerobiales</taxon>
        <taxon>Halothermotrichaceae</taxon>
        <taxon>Halothermothrix</taxon>
    </lineage>
</organism>
<accession>B8CZZ9</accession>
<gene>
    <name evidence="1" type="primary">serS</name>
    <name type="ordered locus">Hore_21060</name>
</gene>
<proteinExistence type="inferred from homology"/>
<sequence length="422" mass="48248">MLDMKFIRENLETVADMLKRRGTEAPLDEFKELDEKRREIIQEVEQLKHKRNVVSSKIGELKRAGEDASDIIAEMKEVSATIKKYDEELRGIEERLQQVVLSIPNMPHDSVPVGEDEDDNVEVRRWGEPRKFDFEFKPHWDLGEALDILDFERGSKVSGARFTFLKGAGARLERSLISFMIDHHTQNGYTEIFPPFMVNSDSCIGTGQLPKFAGDMFKVEGTDYYLIPTAEVPVTNLYRDEILNAEDLPVYHVAYSACFRAEAGAHGRDTRGIIRQHQFNKVELVKFVHPDKSFEELEKLTRNAEEILQMLELPYRVVTLCTGDLTFSSAKTYDIEVWMPAYDTYREISSCSNFKDFQARRAGIRFRPEPGAKAEYVHTLNGSGLAIGRTVAAIMENYQNEDGSITVPEVLRPYMGMDVIKP</sequence>